<sequence>ILGAILPLVSGLLSNKL</sequence>
<organism>
    <name type="scientific">Alytes obstetricans</name>
    <name type="common">Common midwife toad</name>
    <name type="synonym">Bufo obstetricans</name>
    <dbReference type="NCBI Taxonomy" id="8443"/>
    <lineage>
        <taxon>Eukaryota</taxon>
        <taxon>Metazoa</taxon>
        <taxon>Chordata</taxon>
        <taxon>Craniata</taxon>
        <taxon>Vertebrata</taxon>
        <taxon>Euteleostomi</taxon>
        <taxon>Amphibia</taxon>
        <taxon>Batrachia</taxon>
        <taxon>Anura</taxon>
        <taxon>Alytidae</taxon>
        <taxon>Alytinae</taxon>
        <taxon>Alytes</taxon>
    </lineage>
</organism>
<accession>P0DQW6</accession>
<comment type="function">
    <text evidence="1">Shows more potent growth inhibitory activity against the Gram-positive bacteria S.aureus (MIC=50 uM) than against the Gram-negative bacteria E.coli (MIC=150 uM). Has a weak hemolytic activity against human erythrocytes (LC(50)=135 uM).</text>
</comment>
<comment type="subcellular location">
    <subcellularLocation>
        <location evidence="2">Secreted</location>
    </subcellularLocation>
    <subcellularLocation>
        <location evidence="4">Target cell membrane</location>
    </subcellularLocation>
</comment>
<comment type="tissue specificity">
    <text evidence="5">Expressed by the skin glands.</text>
</comment>
<comment type="mass spectrometry"/>
<comment type="similarity">
    <text evidence="4">Belongs to the frog skin active peptide (FSAP) family. Alyteserin-2 subfamily.</text>
</comment>
<name>ATI2B_ALYOB</name>
<proteinExistence type="evidence at protein level"/>
<keyword id="KW-0027">Amidation</keyword>
<keyword id="KW-0878">Amphibian defense peptide</keyword>
<keyword id="KW-0044">Antibiotic</keyword>
<keyword id="KW-0929">Antimicrobial</keyword>
<keyword id="KW-0903">Direct protein sequencing</keyword>
<keyword id="KW-0391">Immunity</keyword>
<keyword id="KW-0399">Innate immunity</keyword>
<keyword id="KW-0472">Membrane</keyword>
<keyword id="KW-0964">Secreted</keyword>
<keyword id="KW-1052">Target cell membrane</keyword>
<keyword id="KW-1053">Target membrane</keyword>
<reference key="1">
    <citation type="journal article" date="2009" name="Peptides">
        <title>The alyteserins: two families of antimicrobial peptides from the skin secretions of the midwife toad Alytes obstetricans (Alytidae).</title>
        <authorList>
            <person name="Conlon J.M."/>
            <person name="Demandt A."/>
            <person name="Nielsen P.F."/>
            <person name="Leprince J."/>
            <person name="Vaudry H."/>
            <person name="Woodhams D.C."/>
        </authorList>
    </citation>
    <scope>PROTEIN SEQUENCE</scope>
    <scope>SUBCELLULAR LOCATION</scope>
    <scope>AMIDATION AT LEU-17</scope>
    <scope>MASS SPECTROMETRY</scope>
    <source>
        <tissue>Skin secretion</tissue>
    </source>
</reference>
<evidence type="ECO:0000250" key="1">
    <source>
        <dbReference type="UniProtKB" id="P0DQW5"/>
    </source>
</evidence>
<evidence type="ECO:0000269" key="2">
    <source>
    </source>
</evidence>
<evidence type="ECO:0000303" key="3">
    <source>
    </source>
</evidence>
<evidence type="ECO:0000305" key="4"/>
<evidence type="ECO:0000305" key="5">
    <source>
    </source>
</evidence>
<protein>
    <recommendedName>
        <fullName evidence="3">Alyteserin-2b</fullName>
    </recommendedName>
</protein>
<dbReference type="GO" id="GO:0005576">
    <property type="term" value="C:extracellular region"/>
    <property type="evidence" value="ECO:0007669"/>
    <property type="project" value="UniProtKB-SubCell"/>
</dbReference>
<dbReference type="GO" id="GO:0016020">
    <property type="term" value="C:membrane"/>
    <property type="evidence" value="ECO:0007669"/>
    <property type="project" value="UniProtKB-KW"/>
</dbReference>
<dbReference type="GO" id="GO:0044218">
    <property type="term" value="C:other organism cell membrane"/>
    <property type="evidence" value="ECO:0007669"/>
    <property type="project" value="UniProtKB-KW"/>
</dbReference>
<dbReference type="GO" id="GO:0042742">
    <property type="term" value="P:defense response to bacterium"/>
    <property type="evidence" value="ECO:0007669"/>
    <property type="project" value="UniProtKB-KW"/>
</dbReference>
<dbReference type="GO" id="GO:0045087">
    <property type="term" value="P:innate immune response"/>
    <property type="evidence" value="ECO:0007669"/>
    <property type="project" value="UniProtKB-KW"/>
</dbReference>
<feature type="peptide" id="PRO_0000457135" description="Alyteserin-2b" evidence="2">
    <location>
        <begin position="1"/>
        <end position="17"/>
    </location>
</feature>
<feature type="modified residue" description="Leucine amide" evidence="2">
    <location>
        <position position="17"/>
    </location>
</feature>